<gene>
    <name evidence="1" type="primary">trm1</name>
    <name type="ordered locus">aq_841</name>
</gene>
<organism>
    <name type="scientific">Aquifex aeolicus (strain VF5)</name>
    <dbReference type="NCBI Taxonomy" id="224324"/>
    <lineage>
        <taxon>Bacteria</taxon>
        <taxon>Pseudomonadati</taxon>
        <taxon>Aquificota</taxon>
        <taxon>Aquificia</taxon>
        <taxon>Aquificales</taxon>
        <taxon>Aquificaceae</taxon>
        <taxon>Aquifex</taxon>
    </lineage>
</organism>
<accession>O67010</accession>
<reference key="1">
    <citation type="journal article" date="1998" name="Nature">
        <title>The complete genome of the hyperthermophilic bacterium Aquifex aeolicus.</title>
        <authorList>
            <person name="Deckert G."/>
            <person name="Warren P.V."/>
            <person name="Gaasterland T."/>
            <person name="Young W.G."/>
            <person name="Lenox A.L."/>
            <person name="Graham D.E."/>
            <person name="Overbeek R."/>
            <person name="Snead M.A."/>
            <person name="Keller M."/>
            <person name="Aujay M."/>
            <person name="Huber R."/>
            <person name="Feldman R.A."/>
            <person name="Short J.M."/>
            <person name="Olsen G.J."/>
            <person name="Swanson R.V."/>
        </authorList>
    </citation>
    <scope>NUCLEOTIDE SEQUENCE [LARGE SCALE GENOMIC DNA]</scope>
    <source>
        <strain>VF5</strain>
    </source>
</reference>
<reference key="2">
    <citation type="journal article" date="2009" name="J. Biol. Chem.">
        <title>Aquifex aeolicus tRNA (N2,N2-guanine)-dimethyltransferase (Trm1) catalyzes transfer of methyl groups not only to guanine 26 but also to guanine 27 in tRNA.</title>
        <authorList>
            <person name="Awai T."/>
            <person name="Kimura S."/>
            <person name="Tomikawa C."/>
            <person name="Ochi A."/>
            <person name="Ihsanawati X."/>
            <person name="Bessho Y."/>
            <person name="Yokoyama S."/>
            <person name="Ohno S."/>
            <person name="Nishikawa K."/>
            <person name="Yokogawa T."/>
            <person name="Suzuki T."/>
            <person name="Hori H."/>
        </authorList>
    </citation>
    <scope>FUNCTION</scope>
    <scope>CATALYTIC ACTIVITY</scope>
</reference>
<reference evidence="4 5" key="3">
    <citation type="journal article" date="2011" name="J. Biol. Chem.">
        <title>Substrate tRNA recognition mechanism of a multisite-specific tRNA methyltransferase, Aquifex aeolicus Trm1, based on the X-ray crystal structure.</title>
        <authorList>
            <person name="Awai T."/>
            <person name="Ochi A."/>
            <person name="Ihsanawati X."/>
            <person name="Sengoku T."/>
            <person name="Hirata A."/>
            <person name="Bessho Y."/>
            <person name="Yokoyama S."/>
            <person name="Hori H."/>
        </authorList>
    </citation>
    <scope>X-RAY CRYSTALLOGRAPHY (2.16 ANGSTROMS) IN COMPLEX WITH S-ADENOSYL-L-METHIONINE AND ZN(2+)</scope>
    <scope>FUNCTION</scope>
    <scope>CATALYTIC ACTIVITY</scope>
    <scope>BIOPHYSICOCHEMICAL PROPERTIES</scope>
    <scope>MUTAGENESIS OF GLU-6; PHE-27; ARG-31; ARG-36; ARG-66; ASP-84; ILE-85; HIS-110; GLU-113; ASP-130; ASP-132; PHE-134; PHE-140; LYS-170; ARG-179; ARG-192; HIS-219; 247-CYS--CYS-250; CYS-247; CYS-250; CYS-266; CYS-269; HIS-274 AND LYS-283</scope>
</reference>
<proteinExistence type="evidence at protein level"/>
<keyword id="KW-0002">3D-structure</keyword>
<keyword id="KW-0479">Metal-binding</keyword>
<keyword id="KW-0489">Methyltransferase</keyword>
<keyword id="KW-1185">Reference proteome</keyword>
<keyword id="KW-0694">RNA-binding</keyword>
<keyword id="KW-0949">S-adenosyl-L-methionine</keyword>
<keyword id="KW-0808">Transferase</keyword>
<keyword id="KW-0819">tRNA processing</keyword>
<keyword id="KW-0820">tRNA-binding</keyword>
<keyword id="KW-0862">Zinc</keyword>
<feature type="chain" id="PRO_0000147678" description="tRNA (guanine(26)-N(2)/guanine(27)-N(2))-dimethyltransferase">
    <location>
        <begin position="1"/>
        <end position="392"/>
    </location>
</feature>
<feature type="domain" description="Trm1 methyltransferase" evidence="1">
    <location>
        <begin position="2"/>
        <end position="375"/>
    </location>
</feature>
<feature type="binding site" evidence="3 5">
    <location>
        <position position="36"/>
    </location>
    <ligand>
        <name>S-adenosyl-L-methionine</name>
        <dbReference type="ChEBI" id="CHEBI:59789"/>
    </ligand>
</feature>
<feature type="binding site" evidence="3 5">
    <location>
        <position position="66"/>
    </location>
    <ligand>
        <name>S-adenosyl-L-methionine</name>
        <dbReference type="ChEBI" id="CHEBI:59789"/>
    </ligand>
</feature>
<feature type="binding site" evidence="3 5">
    <location>
        <position position="84"/>
    </location>
    <ligand>
        <name>S-adenosyl-L-methionine</name>
        <dbReference type="ChEBI" id="CHEBI:59789"/>
    </ligand>
</feature>
<feature type="binding site" evidence="3 5">
    <location>
        <position position="113"/>
    </location>
    <ligand>
        <name>S-adenosyl-L-methionine</name>
        <dbReference type="ChEBI" id="CHEBI:59789"/>
    </ligand>
</feature>
<feature type="binding site" evidence="3 5">
    <location>
        <position position="114"/>
    </location>
    <ligand>
        <name>S-adenosyl-L-methionine</name>
        <dbReference type="ChEBI" id="CHEBI:59789"/>
    </ligand>
</feature>
<feature type="binding site" evidence="3 4 5">
    <location>
        <position position="247"/>
    </location>
    <ligand>
        <name>Zn(2+)</name>
        <dbReference type="ChEBI" id="CHEBI:29105"/>
    </ligand>
</feature>
<feature type="binding site" evidence="3 4 5">
    <location>
        <position position="250"/>
    </location>
    <ligand>
        <name>Zn(2+)</name>
        <dbReference type="ChEBI" id="CHEBI:29105"/>
    </ligand>
</feature>
<feature type="binding site" evidence="3 4 5">
    <location>
        <position position="266"/>
    </location>
    <ligand>
        <name>Zn(2+)</name>
        <dbReference type="ChEBI" id="CHEBI:29105"/>
    </ligand>
</feature>
<feature type="binding site" evidence="3 4 5">
    <location>
        <position position="269"/>
    </location>
    <ligand>
        <name>Zn(2+)</name>
        <dbReference type="ChEBI" id="CHEBI:29105"/>
    </ligand>
</feature>
<feature type="mutagenesis site" description="Does not affect tRNA guanine-dimethyltransferase activity." evidence="3">
    <original>E</original>
    <variation>A</variation>
    <location>
        <position position="6"/>
    </location>
</feature>
<feature type="mutagenesis site" description="Strongly reduced tRNA guanine-dimethyltransferase activity." evidence="3">
    <original>F</original>
    <variation>A</variation>
    <location>
        <position position="27"/>
    </location>
</feature>
<feature type="mutagenesis site" description="Decreased tRNA guanine-dimethyltransferase activity." evidence="3">
    <original>R</original>
    <variation>A</variation>
    <location>
        <position position="31"/>
    </location>
</feature>
<feature type="mutagenesis site" description="Strongly reduced tRNA guanine-dimethyltransferase activity." evidence="3">
    <original>R</original>
    <variation>A</variation>
    <location>
        <position position="36"/>
    </location>
</feature>
<feature type="mutagenesis site" description="Strongly reduced tRNA guanine-dimethyltransferase activity." evidence="3">
    <original>R</original>
    <variation>A</variation>
    <location>
        <position position="66"/>
    </location>
</feature>
<feature type="mutagenesis site" description="Strongly reduced tRNA guanine-dimethyltransferase activity." evidence="3">
    <original>D</original>
    <variation>A</variation>
    <location>
        <position position="84"/>
    </location>
</feature>
<feature type="mutagenesis site" description="Slightly decreased tRNA guanine-dimethyltransferase activity." evidence="3">
    <original>I</original>
    <variation>A</variation>
    <location>
        <position position="85"/>
    </location>
</feature>
<feature type="mutagenesis site" description="Decreased tRNA guanine-dimethyltransferase activity." evidence="3">
    <original>H</original>
    <variation>A</variation>
    <location>
        <position position="110"/>
    </location>
</feature>
<feature type="mutagenesis site" description="Slightly decreased tRNA guanine-dimethyltransferase activity." evidence="3">
    <original>E</original>
    <variation>A</variation>
    <location>
        <position position="113"/>
    </location>
</feature>
<feature type="mutagenesis site" description="Strongly decreased tRNA guanine-dimethyltransferase activity." evidence="3">
    <original>D</original>
    <variation>A</variation>
    <location>
        <position position="130"/>
    </location>
</feature>
<feature type="mutagenesis site" description="Abolished tRNA guanine-dimethyltransferase activity." evidence="3">
    <original>D</original>
    <variation>A</variation>
    <location>
        <position position="132"/>
    </location>
</feature>
<feature type="mutagenesis site" description="Slightly decreased tRNA guanine-dimethyltransferase activity." evidence="3">
    <original>F</original>
    <variation>A</variation>
    <location>
        <position position="134"/>
    </location>
</feature>
<feature type="mutagenesis site" description="Decreased tRNA guanine-dimethyltransferase activity." evidence="3">
    <original>F</original>
    <variation>A</variation>
    <location>
        <position position="140"/>
    </location>
</feature>
<feature type="mutagenesis site" description="Decreased tRNA guanine-dimethyltransferase activity." evidence="3">
    <original>K</original>
    <variation>A</variation>
    <location>
        <position position="170"/>
    </location>
</feature>
<feature type="mutagenesis site" description="Strongly decreased tRNA guanine-dimethyltransferase activity." evidence="3">
    <original>R</original>
    <variation>A</variation>
    <location>
        <position position="179"/>
    </location>
</feature>
<feature type="mutagenesis site" description="Decreased tRNA guanine-dimethyltransferase activity." evidence="3">
    <original>R</original>
    <variation>A</variation>
    <location>
        <position position="192"/>
    </location>
</feature>
<feature type="mutagenesis site" description="Strongly decreased tRNA guanine-dimethyltransferase activity." evidence="3">
    <original>H</original>
    <variation>A</variation>
    <location>
        <position position="219"/>
    </location>
</feature>
<feature type="mutagenesis site" description="Decreased tRNA guanine-dimethyltransferase activity." evidence="3">
    <original>CFNC</original>
    <variation>SFNS</variation>
    <location>
        <begin position="247"/>
        <end position="250"/>
    </location>
</feature>
<feature type="mutagenesis site" description="Does not significantly affect tRNA guanine-dimethyltransferase activity." evidence="3">
    <original>C</original>
    <variation>S</variation>
    <location>
        <position position="247"/>
    </location>
</feature>
<feature type="mutagenesis site" description="Does not significantly affect tRNA guanine-dimethyltransferase activity." evidence="3">
    <original>C</original>
    <variation>S</variation>
    <location>
        <position position="250"/>
    </location>
</feature>
<feature type="mutagenesis site" description="Does not significantly affect tRNA guanine-dimethyltransferase activity." evidence="3">
    <original>C</original>
    <variation>S</variation>
    <location>
        <position position="266"/>
    </location>
</feature>
<feature type="mutagenesis site" description="Does not significantly affect tRNA guanine-dimethyltransferase activity." evidence="3">
    <original>C</original>
    <variation>S</variation>
    <location>
        <position position="269"/>
    </location>
</feature>
<feature type="mutagenesis site" description="Decreased tRNA guanine-dimethyltransferase activity." evidence="3">
    <original>H</original>
    <variation>A</variation>
    <location>
        <position position="274"/>
    </location>
</feature>
<feature type="mutagenesis site" description="Decreased tRNA guanine-dimethyltransferase activity." evidence="3">
    <original>K</original>
    <variation>A</variation>
    <location>
        <position position="283"/>
    </location>
</feature>
<feature type="strand" evidence="6">
    <location>
        <begin position="2"/>
        <end position="6"/>
    </location>
</feature>
<feature type="strand" evidence="6">
    <location>
        <begin position="9"/>
        <end position="13"/>
    </location>
</feature>
<feature type="helix" evidence="6">
    <location>
        <begin position="30"/>
        <end position="32"/>
    </location>
</feature>
<feature type="helix" evidence="6">
    <location>
        <begin position="33"/>
        <end position="50"/>
    </location>
</feature>
<feature type="strand" evidence="6">
    <location>
        <begin position="54"/>
        <end position="60"/>
    </location>
</feature>
<feature type="helix" evidence="6">
    <location>
        <begin position="65"/>
        <end position="73"/>
    </location>
</feature>
<feature type="strand" evidence="6">
    <location>
        <begin position="77"/>
        <end position="83"/>
    </location>
</feature>
<feature type="helix" evidence="6">
    <location>
        <begin position="87"/>
        <end position="99"/>
    </location>
</feature>
<feature type="helix" evidence="6">
    <location>
        <begin position="104"/>
        <end position="106"/>
    </location>
</feature>
<feature type="strand" evidence="6">
    <location>
        <begin position="107"/>
        <end position="110"/>
    </location>
</feature>
<feature type="helix" evidence="6">
    <location>
        <begin position="114"/>
        <end position="119"/>
    </location>
</feature>
<feature type="strand" evidence="6">
    <location>
        <begin position="126"/>
        <end position="131"/>
    </location>
</feature>
<feature type="helix" evidence="6">
    <location>
        <begin position="138"/>
        <end position="140"/>
    </location>
</feature>
<feature type="helix" evidence="6">
    <location>
        <begin position="141"/>
        <end position="147"/>
    </location>
</feature>
<feature type="strand" evidence="6">
    <location>
        <begin position="148"/>
        <end position="158"/>
    </location>
</feature>
<feature type="helix" evidence="6">
    <location>
        <begin position="161"/>
        <end position="164"/>
    </location>
</feature>
<feature type="helix" evidence="6">
    <location>
        <begin position="169"/>
        <end position="176"/>
    </location>
</feature>
<feature type="strand" evidence="6">
    <location>
        <begin position="177"/>
        <end position="179"/>
    </location>
</feature>
<feature type="helix" evidence="6">
    <location>
        <begin position="186"/>
        <end position="203"/>
    </location>
</feature>
<feature type="turn" evidence="6">
    <location>
        <begin position="204"/>
        <end position="206"/>
    </location>
</feature>
<feature type="strand" evidence="6">
    <location>
        <begin position="207"/>
        <end position="217"/>
    </location>
</feature>
<feature type="strand" evidence="6">
    <location>
        <begin position="220"/>
        <end position="229"/>
    </location>
</feature>
<feature type="helix" evidence="6">
    <location>
        <begin position="231"/>
        <end position="238"/>
    </location>
</feature>
<feature type="strand" evidence="6">
    <location>
        <begin position="241"/>
        <end position="246"/>
    </location>
</feature>
<feature type="turn" evidence="6">
    <location>
        <begin position="248"/>
        <end position="250"/>
    </location>
</feature>
<feature type="strand" evidence="6">
    <location>
        <begin position="253"/>
        <end position="256"/>
    </location>
</feature>
<feature type="helix" evidence="6">
    <location>
        <begin position="259"/>
        <end position="261"/>
    </location>
</feature>
<feature type="turn" evidence="6">
    <location>
        <begin position="267"/>
        <end position="269"/>
    </location>
</feature>
<feature type="strand" evidence="6">
    <location>
        <begin position="274"/>
        <end position="280"/>
    </location>
</feature>
<feature type="helix" evidence="6">
    <location>
        <begin position="287"/>
        <end position="298"/>
    </location>
</feature>
<feature type="helix" evidence="6">
    <location>
        <begin position="305"/>
        <end position="318"/>
    </location>
</feature>
<feature type="helix" evidence="6">
    <location>
        <begin position="328"/>
        <end position="335"/>
    </location>
</feature>
<feature type="helix" evidence="6">
    <location>
        <begin position="343"/>
        <end position="349"/>
    </location>
</feature>
<feature type="strand" evidence="7">
    <location>
        <begin position="356"/>
        <end position="358"/>
    </location>
</feature>
<feature type="strand" evidence="6">
    <location>
        <begin position="361"/>
        <end position="363"/>
    </location>
</feature>
<feature type="helix" evidence="6">
    <location>
        <begin position="368"/>
        <end position="384"/>
    </location>
</feature>
<sequence>MEIVQEGIAKIIVPEIPKTVSSDMPVFYNPRMRVNRDLAVLGLEYLCKKLGRPVKVADPLSASGIRAIRFLLETSCVEKAYANDISSKAIEIMKENFKLNNIPEDRYEIHGMEANFFLRKEWGFGFDYVDLDPFGTPVPFIESVALSMKRGGILSLTATDTAPLSGTYPKTCMRRYMARPLRNEFKHEVGIRILIKKVIELAAQYDIAMIPIFAYSHLHYFKLFFVKERGVEKVDKLIEQFGYIQYCFNCMNREVVTDLYKFKEKCPHCGSKFHIGGPLWIGKLWDEEFTNFLYEEAQKREEIEKETKRILKLIKEESQLQTVGFYVLSKLAEKVKLPAQPPIRIAVKFFNGVRTHFVGDGFRTNLSFEEVMKKMEELKEKQKEFLEKKKQG</sequence>
<protein>
    <recommendedName>
        <fullName evidence="1">tRNA (guanine(26)-N(2)/guanine(27)-N(2))-dimethyltransferase</fullName>
        <ecNumber evidence="1">2.1.1.215</ecNumber>
    </recommendedName>
</protein>
<dbReference type="EC" id="2.1.1.215" evidence="1"/>
<dbReference type="EMBL" id="AE000657">
    <property type="protein sequence ID" value="AAC06976.1"/>
    <property type="molecule type" value="Genomic_DNA"/>
</dbReference>
<dbReference type="PIR" id="G70372">
    <property type="entry name" value="G70372"/>
</dbReference>
<dbReference type="RefSeq" id="NP_213571.1">
    <property type="nucleotide sequence ID" value="NC_000918.1"/>
</dbReference>
<dbReference type="RefSeq" id="WP_010880509.1">
    <property type="nucleotide sequence ID" value="NC_000918.1"/>
</dbReference>
<dbReference type="PDB" id="3AXS">
    <property type="method" value="X-ray"/>
    <property type="resolution" value="2.16 A"/>
    <property type="chains" value="A=1-392"/>
</dbReference>
<dbReference type="PDB" id="3AXT">
    <property type="method" value="X-ray"/>
    <property type="resolution" value="2.49 A"/>
    <property type="chains" value="A=1-392"/>
</dbReference>
<dbReference type="PDBsum" id="3AXS"/>
<dbReference type="PDBsum" id="3AXT"/>
<dbReference type="SMR" id="O67010"/>
<dbReference type="STRING" id="224324.aq_841"/>
<dbReference type="EnsemblBacteria" id="AAC06976">
    <property type="protein sequence ID" value="AAC06976"/>
    <property type="gene ID" value="aq_841"/>
</dbReference>
<dbReference type="KEGG" id="aae:aq_841"/>
<dbReference type="eggNOG" id="COG1867">
    <property type="taxonomic scope" value="Bacteria"/>
</dbReference>
<dbReference type="HOGENOM" id="CLU_010862_5_1_0"/>
<dbReference type="InParanoid" id="O67010"/>
<dbReference type="OrthoDB" id="9826at2"/>
<dbReference type="BioCyc" id="MetaCyc:MONOMER-16631"/>
<dbReference type="BRENDA" id="2.1.1.215">
    <property type="organism ID" value="396"/>
</dbReference>
<dbReference type="EvolutionaryTrace" id="O67010"/>
<dbReference type="Proteomes" id="UP000000798">
    <property type="component" value="Chromosome"/>
</dbReference>
<dbReference type="GO" id="GO:0160104">
    <property type="term" value="F:tRNA (guanine(26)-N2)-dimethyltransferase activity"/>
    <property type="evidence" value="ECO:0007669"/>
    <property type="project" value="UniProtKB-UniRule"/>
</dbReference>
<dbReference type="GO" id="GO:0160103">
    <property type="term" value="F:tRNA (guanine(26)-N2/guanine(27)-N2)-dimethyltransferase activity"/>
    <property type="evidence" value="ECO:0000314"/>
    <property type="project" value="UniProtKB"/>
</dbReference>
<dbReference type="GO" id="GO:0000049">
    <property type="term" value="F:tRNA binding"/>
    <property type="evidence" value="ECO:0007669"/>
    <property type="project" value="UniProtKB-KW"/>
</dbReference>
<dbReference type="GO" id="GO:0008270">
    <property type="term" value="F:zinc ion binding"/>
    <property type="evidence" value="ECO:0000314"/>
    <property type="project" value="UniProtKB"/>
</dbReference>
<dbReference type="GO" id="GO:0002940">
    <property type="term" value="P:tRNA N2-guanine methylation"/>
    <property type="evidence" value="ECO:0000318"/>
    <property type="project" value="GO_Central"/>
</dbReference>
<dbReference type="CDD" id="cd02440">
    <property type="entry name" value="AdoMet_MTases"/>
    <property type="match status" value="1"/>
</dbReference>
<dbReference type="FunFam" id="3.40.50.150:FF:000272">
    <property type="entry name" value="tRNA (guanine(26)-N(2))-dimethyltransferase"/>
    <property type="match status" value="1"/>
</dbReference>
<dbReference type="Gene3D" id="3.30.56.70">
    <property type="entry name" value="N2,N2-dimethylguanosine tRNA methyltransferase, C-terminal domain"/>
    <property type="match status" value="1"/>
</dbReference>
<dbReference type="Gene3D" id="3.40.50.150">
    <property type="entry name" value="Vaccinia Virus protein VP39"/>
    <property type="match status" value="1"/>
</dbReference>
<dbReference type="HAMAP" id="MF_00290">
    <property type="entry name" value="tRNA_dimethyltr_TRM1"/>
    <property type="match status" value="1"/>
</dbReference>
<dbReference type="InterPro" id="IPR029063">
    <property type="entry name" value="SAM-dependent_MTases_sf"/>
</dbReference>
<dbReference type="InterPro" id="IPR002905">
    <property type="entry name" value="Trm1"/>
</dbReference>
<dbReference type="InterPro" id="IPR022923">
    <property type="entry name" value="TRM1_arc_bac"/>
</dbReference>
<dbReference type="InterPro" id="IPR042296">
    <property type="entry name" value="tRNA_met_Trm1_C"/>
</dbReference>
<dbReference type="NCBIfam" id="TIGR00308">
    <property type="entry name" value="TRM1"/>
    <property type="match status" value="1"/>
</dbReference>
<dbReference type="PANTHER" id="PTHR10631">
    <property type="entry name" value="N 2 ,N 2 -DIMETHYLGUANOSINE TRNA METHYLTRANSFERASE"/>
    <property type="match status" value="1"/>
</dbReference>
<dbReference type="PANTHER" id="PTHR10631:SF3">
    <property type="entry name" value="TRNA (GUANINE(26)-N(2))-DIMETHYLTRANSFERASE"/>
    <property type="match status" value="1"/>
</dbReference>
<dbReference type="Pfam" id="PF02005">
    <property type="entry name" value="TRM"/>
    <property type="match status" value="1"/>
</dbReference>
<dbReference type="SUPFAM" id="SSF53335">
    <property type="entry name" value="S-adenosyl-L-methionine-dependent methyltransferases"/>
    <property type="match status" value="1"/>
</dbReference>
<dbReference type="PROSITE" id="PS51626">
    <property type="entry name" value="SAM_MT_TRM1"/>
    <property type="match status" value="1"/>
</dbReference>
<comment type="function">
    <text evidence="1 2 3">Dimethylates the guanine residues at position 26 and 27 of one or more tRNAs using S-adenosyl-L-methionine as donor of the methyl groups.</text>
</comment>
<comment type="catalytic activity">
    <reaction evidence="1 2 3">
        <text>guanosine(26)/guanosine(27) in tRNA + 4 S-adenosyl-L-methionine = N(2)-dimethylguanosine(26)/N(2)-dimethylguanosine(27) in tRNA + 4 S-adenosyl-L-homocysteine + 4 H(+)</text>
        <dbReference type="Rhea" id="RHEA:43136"/>
        <dbReference type="Rhea" id="RHEA-COMP:10353"/>
        <dbReference type="Rhea" id="RHEA-COMP:10354"/>
        <dbReference type="ChEBI" id="CHEBI:15378"/>
        <dbReference type="ChEBI" id="CHEBI:57856"/>
        <dbReference type="ChEBI" id="CHEBI:59789"/>
        <dbReference type="ChEBI" id="CHEBI:74269"/>
        <dbReference type="ChEBI" id="CHEBI:74513"/>
        <dbReference type="EC" id="2.1.1.215"/>
    </reaction>
</comment>
<comment type="biophysicochemical properties">
    <kinetics>
        <KM evidence="3">170 nM for S-adenosyl-L-methionine</KM>
        <Vmax evidence="3">90.0 nmol/h/mg enzyme</Vmax>
    </kinetics>
</comment>
<comment type="similarity">
    <text evidence="1">Belongs to the class I-like SAM-binding methyltransferase superfamily. Trm1 family.</text>
</comment>
<name>TRM1_AQUAE</name>
<evidence type="ECO:0000255" key="1">
    <source>
        <dbReference type="HAMAP-Rule" id="MF_00290"/>
    </source>
</evidence>
<evidence type="ECO:0000269" key="2">
    <source>
    </source>
</evidence>
<evidence type="ECO:0000269" key="3">
    <source>
    </source>
</evidence>
<evidence type="ECO:0007744" key="4">
    <source>
        <dbReference type="PDB" id="3AXS"/>
    </source>
</evidence>
<evidence type="ECO:0007744" key="5">
    <source>
        <dbReference type="PDB" id="3AXT"/>
    </source>
</evidence>
<evidence type="ECO:0007829" key="6">
    <source>
        <dbReference type="PDB" id="3AXS"/>
    </source>
</evidence>
<evidence type="ECO:0007829" key="7">
    <source>
        <dbReference type="PDB" id="3AXT"/>
    </source>
</evidence>